<evidence type="ECO:0000255" key="1">
    <source>
        <dbReference type="HAMAP-Rule" id="MF_03106"/>
    </source>
</evidence>
<sequence>MANTPHGGVLKDLLARDAPRHDQLAAEAEILPALTLTERQLCDLELIMNGGFSPLEGFMNQKDFDGVCENCRLADGNVFSMPITLDASQKTISELKLQAGSRLTLRDFRDDRNLAILTIDDIYRADKQKEAKLVFGGDPEHPAIKYLNNTVQEFYIGGKIEAVNKLNHYDYVALRYTPAELRVHFDKLGWSRVVAFQTRNPMHRAHRELTVRAARARQANVLIHPVVGLTKPGDIDHFTRVRAYQALLPRYPNGMAVLGLLGLAMRMGGPREAIWHAIIRKNHGATHFIVGRDHAGPGKNSKGEEFYGPYDAQHAVEKYKDELGIEVVEFQQVTYLPDTDEYRPKDEVPAGVKTLDISGTELRKRLRTGAHIPEWFSYPEVVKILRESNPPRASQGFTIFLTGYMNSGKDAIARALQVTLNQQGGRSVTLLLGDTVRHELSSELGFSREDRHTNIQRIAFVAGELTRAGAAVIAAPIAPYEESRKAAREAVAGSGGNFFLVHVATPLEHCEKTDKRGIYAKARRGEIKGFTGVDDPYEAPANADLTVDVSKQSVRSIVHEIILMLESEGYFERL</sequence>
<accession>Q8NJN1</accession>
<protein>
    <recommendedName>
        <fullName evidence="1">Sulfate adenylyltransferase</fullName>
        <ecNumber evidence="1">2.7.7.4</ecNumber>
    </recommendedName>
    <alternativeName>
        <fullName evidence="1">ATP-sulfurylase</fullName>
    </alternativeName>
    <alternativeName>
        <fullName evidence="1">Sulfate adenylate transferase</fullName>
        <shortName evidence="1">SAT</shortName>
    </alternativeName>
</protein>
<keyword id="KW-0021">Allosteric enzyme</keyword>
<keyword id="KW-0028">Amino-acid biosynthesis</keyword>
<keyword id="KW-0067">ATP-binding</keyword>
<keyword id="KW-0198">Cysteine biosynthesis</keyword>
<keyword id="KW-0963">Cytoplasm</keyword>
<keyword id="KW-0486">Methionine biosynthesis</keyword>
<keyword id="KW-0547">Nucleotide-binding</keyword>
<keyword id="KW-0548">Nucleotidyltransferase</keyword>
<keyword id="KW-0808">Transferase</keyword>
<comment type="function">
    <text evidence="1">Catalyzes the first intracellular reaction of sulfate assimilation, forming adenosine-5'-phosphosulfate (APS) from inorganic sulfate and ATP. Plays an important role in sulfate activation as a component of the biosynthesis pathway of sulfur-containing amino acids.</text>
</comment>
<comment type="catalytic activity">
    <reaction evidence="1">
        <text>sulfate + ATP + H(+) = adenosine 5'-phosphosulfate + diphosphate</text>
        <dbReference type="Rhea" id="RHEA:18133"/>
        <dbReference type="ChEBI" id="CHEBI:15378"/>
        <dbReference type="ChEBI" id="CHEBI:16189"/>
        <dbReference type="ChEBI" id="CHEBI:30616"/>
        <dbReference type="ChEBI" id="CHEBI:33019"/>
        <dbReference type="ChEBI" id="CHEBI:58243"/>
        <dbReference type="EC" id="2.7.7.4"/>
    </reaction>
</comment>
<comment type="activity regulation">
    <text evidence="1">Allosterically inhibited by 3'-phosphoadenosine 5'-phosphosulfate (PAPS).</text>
</comment>
<comment type="pathway">
    <text evidence="1">Sulfur metabolism; hydrogen sulfide biosynthesis; sulfite from sulfate: step 1/3.</text>
</comment>
<comment type="subunit">
    <text evidence="1">Homohexamer. Dimer of trimers.</text>
</comment>
<comment type="subcellular location">
    <subcellularLocation>
        <location evidence="1">Cytoplasm</location>
    </subcellularLocation>
</comment>
<comment type="domain">
    <text evidence="1">The adenylyl-sulfate kinase (APS kinase) is non-functional. It is involved in allosteric regulation by PAPS. PAPS binding induces a large rotational rearrangement of domains lowering the substrate affinity of the enzyme.</text>
</comment>
<comment type="similarity">
    <text evidence="1">In the N-terminal section; belongs to the sulfate adenylyltransferase family.</text>
</comment>
<comment type="similarity">
    <text evidence="1">In the C-terminal section; belongs to the APS kinase family.</text>
</comment>
<proteinExistence type="inferred from homology"/>
<name>MET3_ASPNG</name>
<gene>
    <name evidence="1" type="primary">met3</name>
    <name type="synonym">sC</name>
</gene>
<feature type="chain" id="PRO_0000283678" description="Sulfate adenylyltransferase">
    <location>
        <begin position="1"/>
        <end position="574"/>
    </location>
</feature>
<feature type="region of interest" description="N-terminal" evidence="1">
    <location>
        <begin position="1"/>
        <end position="169"/>
    </location>
</feature>
<feature type="region of interest" description="Catalytic" evidence="1">
    <location>
        <begin position="170"/>
        <end position="394"/>
    </location>
</feature>
<feature type="region of interest" description="Allosteric regulation domain; adenylyl-sulfate kinase-like" evidence="1">
    <location>
        <begin position="395"/>
        <end position="574"/>
    </location>
</feature>
<feature type="active site" evidence="1">
    <location>
        <position position="198"/>
    </location>
</feature>
<feature type="active site" evidence="1">
    <location>
        <position position="199"/>
    </location>
</feature>
<feature type="active site" evidence="1">
    <location>
        <position position="200"/>
    </location>
</feature>
<feature type="binding site" evidence="1">
    <location>
        <begin position="197"/>
        <end position="200"/>
    </location>
    <ligand>
        <name>ATP</name>
        <dbReference type="ChEBI" id="CHEBI:30616"/>
    </ligand>
</feature>
<feature type="binding site" evidence="1">
    <location>
        <position position="197"/>
    </location>
    <ligand>
        <name>sulfate</name>
        <dbReference type="ChEBI" id="CHEBI:16189"/>
    </ligand>
</feature>
<feature type="binding site" evidence="1">
    <location>
        <position position="199"/>
    </location>
    <ligand>
        <name>sulfate</name>
        <dbReference type="ChEBI" id="CHEBI:16189"/>
    </ligand>
</feature>
<feature type="binding site" evidence="1">
    <location>
        <begin position="291"/>
        <end position="294"/>
    </location>
    <ligand>
        <name>ATP</name>
        <dbReference type="ChEBI" id="CHEBI:30616"/>
    </ligand>
</feature>
<feature type="binding site" evidence="1">
    <location>
        <position position="295"/>
    </location>
    <ligand>
        <name>sulfate</name>
        <dbReference type="ChEBI" id="CHEBI:16189"/>
    </ligand>
</feature>
<feature type="binding site" evidence="1">
    <location>
        <position position="333"/>
    </location>
    <ligand>
        <name>ATP</name>
        <dbReference type="ChEBI" id="CHEBI:30616"/>
    </ligand>
</feature>
<feature type="binding site" evidence="1">
    <location>
        <begin position="434"/>
        <end position="437"/>
    </location>
    <ligand>
        <name>3'-phosphoadenylyl sulfate</name>
        <dbReference type="ChEBI" id="CHEBI:58339"/>
        <note>allosteric inhibitor</note>
    </ligand>
</feature>
<feature type="binding site" evidence="1">
    <location>
        <position position="451"/>
    </location>
    <ligand>
        <name>3'-phosphoadenylyl sulfate</name>
        <dbReference type="ChEBI" id="CHEBI:58339"/>
        <note>allosteric inhibitor</note>
    </ligand>
</feature>
<feature type="binding site" evidence="1">
    <location>
        <begin position="477"/>
        <end position="478"/>
    </location>
    <ligand>
        <name>3'-phosphoadenylyl sulfate</name>
        <dbReference type="ChEBI" id="CHEBI:58339"/>
        <note>allosteric inhibitor</note>
    </ligand>
</feature>
<feature type="binding site" evidence="1">
    <location>
        <position position="516"/>
    </location>
    <ligand>
        <name>3'-phosphoadenylyl sulfate</name>
        <dbReference type="ChEBI" id="CHEBI:58339"/>
        <note>allosteric inhibitor</note>
    </ligand>
</feature>
<feature type="site" description="Transition state stabilizer" evidence="1">
    <location>
        <position position="203"/>
    </location>
</feature>
<feature type="site" description="Transition state stabilizer" evidence="1">
    <location>
        <position position="206"/>
    </location>
</feature>
<feature type="site" description="Induces change in substrate recognition on ATP binding" evidence="1">
    <location>
        <position position="330"/>
    </location>
</feature>
<organism>
    <name type="scientific">Aspergillus niger</name>
    <dbReference type="NCBI Taxonomy" id="5061"/>
    <lineage>
        <taxon>Eukaryota</taxon>
        <taxon>Fungi</taxon>
        <taxon>Dikarya</taxon>
        <taxon>Ascomycota</taxon>
        <taxon>Pezizomycotina</taxon>
        <taxon>Eurotiomycetes</taxon>
        <taxon>Eurotiomycetidae</taxon>
        <taxon>Eurotiales</taxon>
        <taxon>Aspergillaceae</taxon>
        <taxon>Aspergillus</taxon>
        <taxon>Aspergillus subgen. Circumdati</taxon>
    </lineage>
</organism>
<dbReference type="EC" id="2.7.7.4" evidence="1"/>
<dbReference type="EMBL" id="AF538692">
    <property type="protein sequence ID" value="AAN04497.1"/>
    <property type="molecule type" value="Genomic_DNA"/>
</dbReference>
<dbReference type="SMR" id="Q8NJN1"/>
<dbReference type="PaxDb" id="5061-CADANGAP00009120"/>
<dbReference type="VEuPathDB" id="FungiDB:An11g09790"/>
<dbReference type="VEuPathDB" id="FungiDB:ASPNIDRAFT2_1147237"/>
<dbReference type="VEuPathDB" id="FungiDB:ATCC64974_94590"/>
<dbReference type="VEuPathDB" id="FungiDB:M747DRAFT_297925"/>
<dbReference type="eggNOG" id="KOG0636">
    <property type="taxonomic scope" value="Eukaryota"/>
</dbReference>
<dbReference type="UniPathway" id="UPA00140">
    <property type="reaction ID" value="UER00204"/>
</dbReference>
<dbReference type="GO" id="GO:0005737">
    <property type="term" value="C:cytoplasm"/>
    <property type="evidence" value="ECO:0007669"/>
    <property type="project" value="UniProtKB-SubCell"/>
</dbReference>
<dbReference type="GO" id="GO:0004020">
    <property type="term" value="F:adenylylsulfate kinase activity"/>
    <property type="evidence" value="ECO:0007669"/>
    <property type="project" value="InterPro"/>
</dbReference>
<dbReference type="GO" id="GO:0005524">
    <property type="term" value="F:ATP binding"/>
    <property type="evidence" value="ECO:0007669"/>
    <property type="project" value="UniProtKB-KW"/>
</dbReference>
<dbReference type="GO" id="GO:0004781">
    <property type="term" value="F:sulfate adenylyltransferase (ATP) activity"/>
    <property type="evidence" value="ECO:0007669"/>
    <property type="project" value="UniProtKB-UniRule"/>
</dbReference>
<dbReference type="GO" id="GO:0019344">
    <property type="term" value="P:cysteine biosynthetic process"/>
    <property type="evidence" value="ECO:0007669"/>
    <property type="project" value="UniProtKB-KW"/>
</dbReference>
<dbReference type="GO" id="GO:0070814">
    <property type="term" value="P:hydrogen sulfide biosynthetic process"/>
    <property type="evidence" value="ECO:0007669"/>
    <property type="project" value="UniProtKB-UniRule"/>
</dbReference>
<dbReference type="GO" id="GO:0009086">
    <property type="term" value="P:methionine biosynthetic process"/>
    <property type="evidence" value="ECO:0007669"/>
    <property type="project" value="UniProtKB-KW"/>
</dbReference>
<dbReference type="GO" id="GO:0010134">
    <property type="term" value="P:sulfate assimilation via adenylyl sulfate reduction"/>
    <property type="evidence" value="ECO:0007669"/>
    <property type="project" value="TreeGrafter"/>
</dbReference>
<dbReference type="GO" id="GO:0019379">
    <property type="term" value="P:sulfate assimilation, phosphoadenylyl sulfate reduction by phosphoadenylyl-sulfate reductase (thioredoxin)"/>
    <property type="evidence" value="ECO:0007669"/>
    <property type="project" value="TreeGrafter"/>
</dbReference>
<dbReference type="CDD" id="cd02027">
    <property type="entry name" value="APSK"/>
    <property type="match status" value="1"/>
</dbReference>
<dbReference type="CDD" id="cd00517">
    <property type="entry name" value="ATPS"/>
    <property type="match status" value="1"/>
</dbReference>
<dbReference type="FunFam" id="3.10.400.10:FF:000003">
    <property type="entry name" value="Sulfate adenylyltransferase"/>
    <property type="match status" value="1"/>
</dbReference>
<dbReference type="FunFam" id="3.40.50.300:FF:000802">
    <property type="entry name" value="Sulfate adenylyltransferase"/>
    <property type="match status" value="1"/>
</dbReference>
<dbReference type="FunFam" id="3.40.50.620:FF:000052">
    <property type="entry name" value="Sulfate adenylyltransferase"/>
    <property type="match status" value="1"/>
</dbReference>
<dbReference type="Gene3D" id="3.40.50.620">
    <property type="entry name" value="HUPs"/>
    <property type="match status" value="1"/>
</dbReference>
<dbReference type="Gene3D" id="3.40.50.300">
    <property type="entry name" value="P-loop containing nucleotide triphosphate hydrolases"/>
    <property type="match status" value="1"/>
</dbReference>
<dbReference type="Gene3D" id="3.10.400.10">
    <property type="entry name" value="Sulfate adenylyltransferase"/>
    <property type="match status" value="1"/>
</dbReference>
<dbReference type="HAMAP" id="MF_03106">
    <property type="entry name" value="Sulf_adenylyltr_euk"/>
    <property type="match status" value="1"/>
</dbReference>
<dbReference type="InterPro" id="IPR002891">
    <property type="entry name" value="APS_kinase"/>
</dbReference>
<dbReference type="InterPro" id="IPR025980">
    <property type="entry name" value="ATP-Sase_PUA-like_dom"/>
</dbReference>
<dbReference type="InterPro" id="IPR027417">
    <property type="entry name" value="P-loop_NTPase"/>
</dbReference>
<dbReference type="InterPro" id="IPR015947">
    <property type="entry name" value="PUA-like_sf"/>
</dbReference>
<dbReference type="InterPro" id="IPR014729">
    <property type="entry name" value="Rossmann-like_a/b/a_fold"/>
</dbReference>
<dbReference type="InterPro" id="IPR027535">
    <property type="entry name" value="Sulf_adenylyltr_euk"/>
</dbReference>
<dbReference type="InterPro" id="IPR050512">
    <property type="entry name" value="Sulf_AdTrans/APS_kinase"/>
</dbReference>
<dbReference type="InterPro" id="IPR024951">
    <property type="entry name" value="Sulfurylase_cat_dom"/>
</dbReference>
<dbReference type="InterPro" id="IPR002650">
    <property type="entry name" value="Sulphate_adenylyltransferase"/>
</dbReference>
<dbReference type="NCBIfam" id="TIGR00455">
    <property type="entry name" value="apsK"/>
    <property type="match status" value="1"/>
</dbReference>
<dbReference type="NCBIfam" id="NF004040">
    <property type="entry name" value="PRK05537.1"/>
    <property type="match status" value="1"/>
</dbReference>
<dbReference type="NCBIfam" id="TIGR00339">
    <property type="entry name" value="sopT"/>
    <property type="match status" value="1"/>
</dbReference>
<dbReference type="PANTHER" id="PTHR42700">
    <property type="entry name" value="SULFATE ADENYLYLTRANSFERASE"/>
    <property type="match status" value="1"/>
</dbReference>
<dbReference type="PANTHER" id="PTHR42700:SF1">
    <property type="entry name" value="SULFATE ADENYLYLTRANSFERASE"/>
    <property type="match status" value="1"/>
</dbReference>
<dbReference type="Pfam" id="PF01583">
    <property type="entry name" value="APS_kinase"/>
    <property type="match status" value="1"/>
</dbReference>
<dbReference type="Pfam" id="PF01747">
    <property type="entry name" value="ATP-sulfurylase"/>
    <property type="match status" value="1"/>
</dbReference>
<dbReference type="Pfam" id="PF14306">
    <property type="entry name" value="PUA_2"/>
    <property type="match status" value="1"/>
</dbReference>
<dbReference type="SUPFAM" id="SSF52374">
    <property type="entry name" value="Nucleotidylyl transferase"/>
    <property type="match status" value="1"/>
</dbReference>
<dbReference type="SUPFAM" id="SSF52540">
    <property type="entry name" value="P-loop containing nucleoside triphosphate hydrolases"/>
    <property type="match status" value="1"/>
</dbReference>
<dbReference type="SUPFAM" id="SSF88697">
    <property type="entry name" value="PUA domain-like"/>
    <property type="match status" value="1"/>
</dbReference>
<reference key="1">
    <citation type="journal article" date="2005" name="J. Microbiol. Methods">
        <title>Cloning and use of sC as homologous marker for Aspergillus niger transformation.</title>
        <authorList>
            <person name="Varadarajalu L.P."/>
            <person name="Punekar N.S."/>
        </authorList>
    </citation>
    <scope>NUCLEOTIDE SEQUENCE [GENOMIC DNA]</scope>
    <source>
        <strain>NCIM 565</strain>
    </source>
</reference>